<sequence length="308" mass="34172">MRQINQTQVTEFLLLGLSDGPHTEQLLFIVLLGVYLVTVLGNLLLISLVHVDSQLHTPMYFFLCNLSLADLCFSTNIVPQALVHLLSRKKVIAFTLCAARLLFFLIFGCTQCALLAVMSYDRYVAICNPLRYPNIMTWKVCVQLATGSWTSGILVSVVDTTFILRLPYRGSNSIAHFFCEAPALLILASTDTHASEMAIFLMGVVILLIPVFLILVSYGRIIVTVVKMKSTVGSLKAFSTCGSHLMVVILFYGSAIITYMTPKSSKQQEKSVSVFYAIVTPMLNPLIYSLRNKDVKAALRKVATRNFP</sequence>
<keyword id="KW-1003">Cell membrane</keyword>
<keyword id="KW-0297">G-protein coupled receptor</keyword>
<keyword id="KW-0325">Glycoprotein</keyword>
<keyword id="KW-0472">Membrane</keyword>
<keyword id="KW-0552">Olfaction</keyword>
<keyword id="KW-0675">Receptor</keyword>
<keyword id="KW-1185">Reference proteome</keyword>
<keyword id="KW-0716">Sensory transduction</keyword>
<keyword id="KW-0807">Transducer</keyword>
<keyword id="KW-0812">Transmembrane</keyword>
<keyword id="KW-1133">Transmembrane helix</keyword>
<accession>Q9H210</accession>
<accession>B9EIL5</accession>
<accession>O95224</accession>
<accession>Q6IF28</accession>
<accession>Q8NGH4</accession>
<accession>Q96R52</accession>
<feature type="chain" id="PRO_0000150467" description="Olfactory receptor 2D2">
    <location>
        <begin position="1"/>
        <end position="308"/>
    </location>
</feature>
<feature type="topological domain" description="Extracellular" evidence="1">
    <location>
        <begin position="1"/>
        <end position="25"/>
    </location>
</feature>
<feature type="transmembrane region" description="Helical; Name=1" evidence="1">
    <location>
        <begin position="26"/>
        <end position="49"/>
    </location>
</feature>
<feature type="topological domain" description="Cytoplasmic" evidence="1">
    <location>
        <begin position="50"/>
        <end position="57"/>
    </location>
</feature>
<feature type="transmembrane region" description="Helical; Name=2" evidence="1">
    <location>
        <begin position="58"/>
        <end position="79"/>
    </location>
</feature>
<feature type="topological domain" description="Extracellular" evidence="1">
    <location>
        <begin position="80"/>
        <end position="100"/>
    </location>
</feature>
<feature type="transmembrane region" description="Helical; Name=3" evidence="1">
    <location>
        <begin position="101"/>
        <end position="120"/>
    </location>
</feature>
<feature type="topological domain" description="Cytoplasmic" evidence="1">
    <location>
        <begin position="121"/>
        <end position="139"/>
    </location>
</feature>
<feature type="transmembrane region" description="Helical; Name=4" evidence="1">
    <location>
        <begin position="140"/>
        <end position="158"/>
    </location>
</feature>
<feature type="topological domain" description="Extracellular" evidence="1">
    <location>
        <begin position="159"/>
        <end position="195"/>
    </location>
</feature>
<feature type="transmembrane region" description="Helical; Name=5" evidence="1">
    <location>
        <begin position="196"/>
        <end position="219"/>
    </location>
</feature>
<feature type="topological domain" description="Cytoplasmic" evidence="1">
    <location>
        <begin position="220"/>
        <end position="236"/>
    </location>
</feature>
<feature type="transmembrane region" description="Helical; Name=6" evidence="1">
    <location>
        <begin position="237"/>
        <end position="259"/>
    </location>
</feature>
<feature type="topological domain" description="Extracellular" evidence="1">
    <location>
        <begin position="260"/>
        <end position="270"/>
    </location>
</feature>
<feature type="transmembrane region" description="Helical; Name=7" evidence="1">
    <location>
        <begin position="271"/>
        <end position="290"/>
    </location>
</feature>
<feature type="topological domain" description="Cytoplasmic" evidence="1">
    <location>
        <begin position="291"/>
        <end position="308"/>
    </location>
</feature>
<feature type="glycosylation site" description="N-linked (GlcNAc...) asparagine" evidence="1">
    <location>
        <position position="5"/>
    </location>
</feature>
<feature type="sequence variant" id="VAR_062017" description="In dbSNP:rs57896484.">
    <original>H</original>
    <variation>Y</variation>
    <location>
        <position position="84"/>
    </location>
</feature>
<feature type="sequence variant" id="VAR_046723" description="In dbSNP:rs1965209.">
    <original>S</original>
    <variation>P</variation>
    <location>
        <position position="148"/>
    </location>
</feature>
<feature type="sequence variant" id="VAR_046724" description="In dbSNP:rs1965207.">
    <original>I</original>
    <variation>M</variation>
    <location>
        <position position="163"/>
    </location>
</feature>
<feature type="sequence variant" id="VAR_046725" description="In dbSNP:rs1965208." evidence="3 4 5 6 7">
    <original>I</original>
    <variation>T</variation>
    <location>
        <position position="163"/>
    </location>
</feature>
<feature type="sequence variant" id="VAR_046726" description="In dbSNP:rs2741804." evidence="3 4 6">
    <original>M</original>
    <variation>T</variation>
    <location>
        <position position="202"/>
    </location>
</feature>
<feature type="sequence variant" id="VAR_062018" description="In dbSNP:rs60116285.">
    <original>R</original>
    <variation>G</variation>
    <location>
        <position position="220"/>
    </location>
</feature>
<feature type="sequence conflict" description="In Ref. 5; AAC70020 and 6; AAK95076." evidence="8" ref="5 6">
    <original>N</original>
    <variation>D</variation>
    <location>
        <position position="134"/>
    </location>
</feature>
<evidence type="ECO:0000255" key="1"/>
<evidence type="ECO:0000255" key="2">
    <source>
        <dbReference type="PROSITE-ProRule" id="PRU00521"/>
    </source>
</evidence>
<evidence type="ECO:0000269" key="3">
    <source>
    </source>
</evidence>
<evidence type="ECO:0000269" key="4">
    <source>
    </source>
</evidence>
<evidence type="ECO:0000269" key="5">
    <source>
    </source>
</evidence>
<evidence type="ECO:0000269" key="6">
    <source>
    </source>
</evidence>
<evidence type="ECO:0000269" key="7">
    <source ref="3"/>
</evidence>
<evidence type="ECO:0000305" key="8"/>
<proteinExistence type="evidence at transcript level"/>
<protein>
    <recommendedName>
        <fullName>Olfactory receptor 2D2</fullName>
    </recommendedName>
    <alternativeName>
        <fullName>HB2</fullName>
    </alternativeName>
    <alternativeName>
        <fullName>Olfactory receptor 11-610</fullName>
        <shortName>OR11-610</shortName>
    </alternativeName>
    <alternativeName>
        <fullName>Olfactory receptor 2D1</fullName>
    </alternativeName>
    <alternativeName>
        <fullName>Olfactory receptor OR11-88</fullName>
    </alternativeName>
</protein>
<name>OR2D2_HUMAN</name>
<dbReference type="EMBL" id="AF321237">
    <property type="protein sequence ID" value="AAG45204.1"/>
    <property type="molecule type" value="Genomic_DNA"/>
</dbReference>
<dbReference type="EMBL" id="AB065824">
    <property type="protein sequence ID" value="BAC06043.1"/>
    <property type="molecule type" value="Genomic_DNA"/>
</dbReference>
<dbReference type="EMBL" id="CH471064">
    <property type="protein sequence ID" value="EAW68673.1"/>
    <property type="molecule type" value="Genomic_DNA"/>
</dbReference>
<dbReference type="EMBL" id="BC140729">
    <property type="protein sequence ID" value="AAI40730.1"/>
    <property type="molecule type" value="mRNA"/>
</dbReference>
<dbReference type="EMBL" id="AF065876">
    <property type="protein sequence ID" value="AAC70020.1"/>
    <property type="molecule type" value="Genomic_DNA"/>
</dbReference>
<dbReference type="EMBL" id="AF399591">
    <property type="protein sequence ID" value="AAK95076.1"/>
    <property type="molecule type" value="Genomic_DNA"/>
</dbReference>
<dbReference type="EMBL" id="BK004434">
    <property type="protein sequence ID" value="DAA04832.1"/>
    <property type="molecule type" value="Genomic_DNA"/>
</dbReference>
<dbReference type="CCDS" id="CCDS31416.1"/>
<dbReference type="RefSeq" id="NP_003691.1">
    <property type="nucleotide sequence ID" value="NM_003700.1"/>
</dbReference>
<dbReference type="SMR" id="Q9H210"/>
<dbReference type="FunCoup" id="Q9H210">
    <property type="interactions" value="463"/>
</dbReference>
<dbReference type="STRING" id="9606.ENSP00000299459"/>
<dbReference type="GlyCosmos" id="Q9H210">
    <property type="glycosylation" value="1 site, No reported glycans"/>
</dbReference>
<dbReference type="GlyGen" id="Q9H210">
    <property type="glycosylation" value="1 site"/>
</dbReference>
<dbReference type="iPTMnet" id="Q9H210"/>
<dbReference type="PhosphoSitePlus" id="Q9H210"/>
<dbReference type="BioMuta" id="OR2D2"/>
<dbReference type="DMDM" id="209572777"/>
<dbReference type="MassIVE" id="Q9H210"/>
<dbReference type="PaxDb" id="9606-ENSP00000299459"/>
<dbReference type="Antibodypedia" id="56604">
    <property type="antibodies" value="29 antibodies from 14 providers"/>
</dbReference>
<dbReference type="DNASU" id="120776"/>
<dbReference type="Ensembl" id="ENST00000299459.3">
    <property type="protein sequence ID" value="ENSP00000299459.2"/>
    <property type="gene ID" value="ENSG00000166368.3"/>
</dbReference>
<dbReference type="GeneID" id="120776"/>
<dbReference type="KEGG" id="hsa:120776"/>
<dbReference type="MANE-Select" id="ENST00000299459.3">
    <property type="protein sequence ID" value="ENSP00000299459.2"/>
    <property type="RefSeq nucleotide sequence ID" value="NM_003700.1"/>
    <property type="RefSeq protein sequence ID" value="NP_003691.1"/>
</dbReference>
<dbReference type="UCSC" id="uc010rau.3">
    <property type="organism name" value="human"/>
</dbReference>
<dbReference type="AGR" id="HGNC:8244"/>
<dbReference type="CTD" id="120776"/>
<dbReference type="DisGeNET" id="120776"/>
<dbReference type="GeneCards" id="OR2D2"/>
<dbReference type="HGNC" id="HGNC:8244">
    <property type="gene designation" value="OR2D2"/>
</dbReference>
<dbReference type="HPA" id="ENSG00000166368">
    <property type="expression patterns" value="Not detected"/>
</dbReference>
<dbReference type="MIM" id="608494">
    <property type="type" value="gene"/>
</dbReference>
<dbReference type="neXtProt" id="NX_Q9H210"/>
<dbReference type="OpenTargets" id="ENSG00000166368"/>
<dbReference type="PharmGKB" id="PA32152"/>
<dbReference type="VEuPathDB" id="HostDB:ENSG00000166368"/>
<dbReference type="eggNOG" id="ENOG502SKP3">
    <property type="taxonomic scope" value="Eukaryota"/>
</dbReference>
<dbReference type="GeneTree" id="ENSGT01130000278310"/>
<dbReference type="HOGENOM" id="CLU_012526_1_0_1"/>
<dbReference type="InParanoid" id="Q9H210"/>
<dbReference type="OMA" id="NQIWVTE"/>
<dbReference type="OrthoDB" id="9443695at2759"/>
<dbReference type="PAN-GO" id="Q9H210">
    <property type="GO annotations" value="0 GO annotations based on evolutionary models"/>
</dbReference>
<dbReference type="PhylomeDB" id="Q9H210"/>
<dbReference type="TreeFam" id="TF337251"/>
<dbReference type="PathwayCommons" id="Q9H210"/>
<dbReference type="Reactome" id="R-HSA-9752946">
    <property type="pathway name" value="Expression and translocation of olfactory receptors"/>
</dbReference>
<dbReference type="BioGRID-ORCS" id="120776">
    <property type="hits" value="11 hits in 746 CRISPR screens"/>
</dbReference>
<dbReference type="GeneWiki" id="OR2D2"/>
<dbReference type="GenomeRNAi" id="120776"/>
<dbReference type="Pharos" id="Q9H210">
    <property type="development level" value="Tdark"/>
</dbReference>
<dbReference type="PRO" id="PR:Q9H210"/>
<dbReference type="Proteomes" id="UP000005640">
    <property type="component" value="Chromosome 11"/>
</dbReference>
<dbReference type="RNAct" id="Q9H210">
    <property type="molecule type" value="protein"/>
</dbReference>
<dbReference type="Bgee" id="ENSG00000166368">
    <property type="expression patterns" value="Expressed in mucosa of transverse colon and 6 other cell types or tissues"/>
</dbReference>
<dbReference type="ExpressionAtlas" id="Q9H210">
    <property type="expression patterns" value="baseline and differential"/>
</dbReference>
<dbReference type="GO" id="GO:0016020">
    <property type="term" value="C:membrane"/>
    <property type="evidence" value="ECO:0000303"/>
    <property type="project" value="UniProtKB"/>
</dbReference>
<dbReference type="GO" id="GO:0005886">
    <property type="term" value="C:plasma membrane"/>
    <property type="evidence" value="ECO:0000318"/>
    <property type="project" value="GO_Central"/>
</dbReference>
<dbReference type="GO" id="GO:0004930">
    <property type="term" value="F:G protein-coupled receptor activity"/>
    <property type="evidence" value="ECO:0007669"/>
    <property type="project" value="UniProtKB-KW"/>
</dbReference>
<dbReference type="GO" id="GO:0004984">
    <property type="term" value="F:olfactory receptor activity"/>
    <property type="evidence" value="ECO:0000318"/>
    <property type="project" value="GO_Central"/>
</dbReference>
<dbReference type="GO" id="GO:0050911">
    <property type="term" value="P:detection of chemical stimulus involved in sensory perception of smell"/>
    <property type="evidence" value="ECO:0000318"/>
    <property type="project" value="GO_Central"/>
</dbReference>
<dbReference type="GO" id="GO:0007608">
    <property type="term" value="P:sensory perception of smell"/>
    <property type="evidence" value="ECO:0000303"/>
    <property type="project" value="UniProtKB"/>
</dbReference>
<dbReference type="CDD" id="cd15428">
    <property type="entry name" value="7tmA_OR2D-like"/>
    <property type="match status" value="1"/>
</dbReference>
<dbReference type="FunFam" id="1.20.1070.10:FF:000005">
    <property type="entry name" value="Olfactory receptor"/>
    <property type="match status" value="1"/>
</dbReference>
<dbReference type="Gene3D" id="1.20.1070.10">
    <property type="entry name" value="Rhodopsin 7-helix transmembrane proteins"/>
    <property type="match status" value="1"/>
</dbReference>
<dbReference type="InterPro" id="IPR000276">
    <property type="entry name" value="GPCR_Rhodpsn"/>
</dbReference>
<dbReference type="InterPro" id="IPR017452">
    <property type="entry name" value="GPCR_Rhodpsn_7TM"/>
</dbReference>
<dbReference type="InterPro" id="IPR000725">
    <property type="entry name" value="Olfact_rcpt"/>
</dbReference>
<dbReference type="PANTHER" id="PTHR26453">
    <property type="entry name" value="OLFACTORY RECEPTOR"/>
    <property type="match status" value="1"/>
</dbReference>
<dbReference type="Pfam" id="PF13853">
    <property type="entry name" value="7tm_4"/>
    <property type="match status" value="1"/>
</dbReference>
<dbReference type="PRINTS" id="PR00237">
    <property type="entry name" value="GPCRRHODOPSN"/>
</dbReference>
<dbReference type="PRINTS" id="PR00245">
    <property type="entry name" value="OLFACTORYR"/>
</dbReference>
<dbReference type="SUPFAM" id="SSF81321">
    <property type="entry name" value="Family A G protein-coupled receptor-like"/>
    <property type="match status" value="1"/>
</dbReference>
<dbReference type="PROSITE" id="PS50262">
    <property type="entry name" value="G_PROTEIN_RECEP_F1_2"/>
    <property type="match status" value="1"/>
</dbReference>
<comment type="function">
    <text evidence="8">Odorant receptor.</text>
</comment>
<comment type="subcellular location">
    <subcellularLocation>
        <location>Cell membrane</location>
        <topology>Multi-pass membrane protein</topology>
    </subcellularLocation>
</comment>
<comment type="similarity">
    <text evidence="2">Belongs to the G-protein coupled receptor 1 family.</text>
</comment>
<comment type="online information" name="Human Olfactory Receptor Data Exploratorium (HORDE)">
    <link uri="http://genome.weizmann.ac.il/horde/card/index/symbol:OR2D2"/>
</comment>
<reference key="1">
    <citation type="journal article" date="2001" name="Proc. Natl. Acad. Sci. U.S.A.">
        <title>Genomic analysis of orthologous mouse and human olfactory receptor loci.</title>
        <authorList>
            <person name="Lane R.P."/>
            <person name="Cutforth T."/>
            <person name="Young J."/>
            <person name="Athanasiou M."/>
            <person name="Friedman C."/>
            <person name="Rowen L."/>
            <person name="Evans G."/>
            <person name="Axel R."/>
            <person name="Hood L."/>
            <person name="Trask B.J."/>
        </authorList>
    </citation>
    <scope>NUCLEOTIDE SEQUENCE [GENOMIC DNA]</scope>
    <scope>VARIANTS THR-163 AND THR-202</scope>
</reference>
<reference key="2">
    <citation type="submission" date="2001-07" db="EMBL/GenBank/DDBJ databases">
        <title>Genome-wide discovery and analysis of human seven transmembrane helix receptor genes.</title>
        <authorList>
            <person name="Suwa M."/>
            <person name="Sato T."/>
            <person name="Okouchi I."/>
            <person name="Arita M."/>
            <person name="Futami K."/>
            <person name="Matsumoto S."/>
            <person name="Tsutsumi S."/>
            <person name="Aburatani H."/>
            <person name="Asai K."/>
            <person name="Akiyama Y."/>
        </authorList>
    </citation>
    <scope>NUCLEOTIDE SEQUENCE [GENOMIC DNA]</scope>
</reference>
<reference key="3">
    <citation type="submission" date="2005-09" db="EMBL/GenBank/DDBJ databases">
        <authorList>
            <person name="Mural R.J."/>
            <person name="Istrail S."/>
            <person name="Sutton G.G."/>
            <person name="Florea L."/>
            <person name="Halpern A.L."/>
            <person name="Mobarry C.M."/>
            <person name="Lippert R."/>
            <person name="Walenz B."/>
            <person name="Shatkay H."/>
            <person name="Dew I."/>
            <person name="Miller J.R."/>
            <person name="Flanigan M.J."/>
            <person name="Edwards N.J."/>
            <person name="Bolanos R."/>
            <person name="Fasulo D."/>
            <person name="Halldorsson B.V."/>
            <person name="Hannenhalli S."/>
            <person name="Turner R."/>
            <person name="Yooseph S."/>
            <person name="Lu F."/>
            <person name="Nusskern D.R."/>
            <person name="Shue B.C."/>
            <person name="Zheng X.H."/>
            <person name="Zhong F."/>
            <person name="Delcher A.L."/>
            <person name="Huson D.H."/>
            <person name="Kravitz S.A."/>
            <person name="Mouchard L."/>
            <person name="Reinert K."/>
            <person name="Remington K.A."/>
            <person name="Clark A.G."/>
            <person name="Waterman M.S."/>
            <person name="Eichler E.E."/>
            <person name="Adams M.D."/>
            <person name="Hunkapiller M.W."/>
            <person name="Myers E.W."/>
            <person name="Venter J.C."/>
        </authorList>
    </citation>
    <scope>NUCLEOTIDE SEQUENCE [LARGE SCALE GENOMIC DNA]</scope>
    <scope>VARIANT THR-163</scope>
</reference>
<reference key="4">
    <citation type="journal article" date="2004" name="Genome Res.">
        <title>The status, quality, and expansion of the NIH full-length cDNA project: the Mammalian Gene Collection (MGC).</title>
        <authorList>
            <consortium name="The MGC Project Team"/>
        </authorList>
    </citation>
    <scope>NUCLEOTIDE SEQUENCE [LARGE SCALE MRNA]</scope>
    <scope>VARIANT THR-163</scope>
</reference>
<reference key="5">
    <citation type="journal article" date="1998" name="Genomics">
        <title>Organization and evolution of olfactory receptor genes on human chromosome 11.</title>
        <authorList>
            <person name="Buettner J.A."/>
            <person name="Glusman G."/>
            <person name="Ben-Arie N."/>
            <person name="Ramos P."/>
            <person name="Lancet D."/>
            <person name="Evans G.A."/>
        </authorList>
    </citation>
    <scope>NUCLEOTIDE SEQUENCE [GENOMIC DNA] OF 67-283</scope>
    <scope>VARIANTS THR-163 AND THR-202</scope>
</reference>
<reference key="6">
    <citation type="journal article" date="2002" name="Genomics">
        <title>DEFOG: a practical scheme for deciphering families of genes.</title>
        <authorList>
            <person name="Fuchs T."/>
            <person name="Malecova B."/>
            <person name="Linhart C."/>
            <person name="Sharan R."/>
            <person name="Khen M."/>
            <person name="Herwig R."/>
            <person name="Shmulevich D."/>
            <person name="Elkon R."/>
            <person name="Steinfath M."/>
            <person name="O'Brien J.K."/>
            <person name="Radelof U."/>
            <person name="Lehrach H."/>
            <person name="Lancet D."/>
            <person name="Shamir R."/>
        </authorList>
    </citation>
    <scope>NUCLEOTIDE SEQUENCE [GENOMIC DNA] OF 68-281</scope>
    <scope>VARIANTS THR-163 AND THR-202</scope>
</reference>
<reference key="7">
    <citation type="journal article" date="2004" name="Proc. Natl. Acad. Sci. U.S.A.">
        <title>The human olfactory receptor gene family.</title>
        <authorList>
            <person name="Malnic B."/>
            <person name="Godfrey P.A."/>
            <person name="Buck L.B."/>
        </authorList>
    </citation>
    <scope>IDENTIFICATION</scope>
</reference>
<reference key="8">
    <citation type="journal article" date="2004" name="Proc. Natl. Acad. Sci. U.S.A.">
        <authorList>
            <person name="Malnic B."/>
            <person name="Godfrey P.A."/>
            <person name="Buck L.B."/>
        </authorList>
    </citation>
    <scope>ERRATUM OF PUBMED:14983052</scope>
</reference>
<gene>
    <name type="primary">OR2D2</name>
    <name type="synonym">OR2D1</name>
</gene>
<organism>
    <name type="scientific">Homo sapiens</name>
    <name type="common">Human</name>
    <dbReference type="NCBI Taxonomy" id="9606"/>
    <lineage>
        <taxon>Eukaryota</taxon>
        <taxon>Metazoa</taxon>
        <taxon>Chordata</taxon>
        <taxon>Craniata</taxon>
        <taxon>Vertebrata</taxon>
        <taxon>Euteleostomi</taxon>
        <taxon>Mammalia</taxon>
        <taxon>Eutheria</taxon>
        <taxon>Euarchontoglires</taxon>
        <taxon>Primates</taxon>
        <taxon>Haplorrhini</taxon>
        <taxon>Catarrhini</taxon>
        <taxon>Hominidae</taxon>
        <taxon>Homo</taxon>
    </lineage>
</organism>